<protein>
    <recommendedName>
        <fullName evidence="1">Protein translocase subunit SecA</fullName>
        <ecNumber evidence="1">7.4.2.8</ecNumber>
    </recommendedName>
</protein>
<comment type="function">
    <text evidence="1">Part of the Sec protein translocase complex. Interacts with the SecYEG preprotein conducting channel. Has a central role in coupling the hydrolysis of ATP to the transfer of proteins into and across the cell membrane, serving as an ATP-driven molecular motor driving the stepwise translocation of polypeptide chains across the membrane.</text>
</comment>
<comment type="catalytic activity">
    <reaction evidence="1">
        <text>ATP + H2O + cellular proteinSide 1 = ADP + phosphate + cellular proteinSide 2.</text>
        <dbReference type="EC" id="7.4.2.8"/>
    </reaction>
</comment>
<comment type="cofactor">
    <cofactor evidence="1">
        <name>Zn(2+)</name>
        <dbReference type="ChEBI" id="CHEBI:29105"/>
    </cofactor>
    <text evidence="1">May bind 1 zinc ion per subunit.</text>
</comment>
<comment type="subunit">
    <text evidence="1">Monomer and homodimer. Part of the essential Sec protein translocation apparatus which comprises SecA, SecYEG and auxiliary proteins SecDF. Other proteins may also be involved.</text>
</comment>
<comment type="subcellular location">
    <subcellularLocation>
        <location evidence="1">Cell membrane</location>
        <topology evidence="1">Peripheral membrane protein</topology>
        <orientation evidence="1">Cytoplasmic side</orientation>
    </subcellularLocation>
    <subcellularLocation>
        <location evidence="1">Cytoplasm</location>
    </subcellularLocation>
    <text evidence="1">Distribution is 50-50.</text>
</comment>
<comment type="similarity">
    <text evidence="1">Belongs to the SecA family.</text>
</comment>
<feature type="chain" id="PRO_0000321012" description="Protein translocase subunit SecA">
    <location>
        <begin position="1"/>
        <end position="843"/>
    </location>
</feature>
<feature type="region of interest" description="Disordered" evidence="2">
    <location>
        <begin position="799"/>
        <end position="826"/>
    </location>
</feature>
<feature type="compositionally biased region" description="Basic and acidic residues" evidence="2">
    <location>
        <begin position="799"/>
        <end position="813"/>
    </location>
</feature>
<feature type="binding site" evidence="1">
    <location>
        <position position="91"/>
    </location>
    <ligand>
        <name>ATP</name>
        <dbReference type="ChEBI" id="CHEBI:30616"/>
    </ligand>
</feature>
<feature type="binding site" evidence="1">
    <location>
        <begin position="109"/>
        <end position="113"/>
    </location>
    <ligand>
        <name>ATP</name>
        <dbReference type="ChEBI" id="CHEBI:30616"/>
    </ligand>
</feature>
<feature type="binding site" evidence="1">
    <location>
        <position position="498"/>
    </location>
    <ligand>
        <name>ATP</name>
        <dbReference type="ChEBI" id="CHEBI:30616"/>
    </ligand>
</feature>
<feature type="binding site" evidence="1">
    <location>
        <position position="829"/>
    </location>
    <ligand>
        <name>Zn(2+)</name>
        <dbReference type="ChEBI" id="CHEBI:29105"/>
    </ligand>
</feature>
<feature type="binding site" evidence="1">
    <location>
        <position position="831"/>
    </location>
    <ligand>
        <name>Zn(2+)</name>
        <dbReference type="ChEBI" id="CHEBI:29105"/>
    </ligand>
</feature>
<feature type="binding site" evidence="1">
    <location>
        <position position="840"/>
    </location>
    <ligand>
        <name>Zn(2+)</name>
        <dbReference type="ChEBI" id="CHEBI:29105"/>
    </ligand>
</feature>
<feature type="binding site" evidence="1">
    <location>
        <position position="841"/>
    </location>
    <ligand>
        <name>Zn(2+)</name>
        <dbReference type="ChEBI" id="CHEBI:29105"/>
    </ligand>
</feature>
<proteinExistence type="inferred from homology"/>
<name>SECA_STAAB</name>
<dbReference type="EC" id="7.4.2.8" evidence="1"/>
<dbReference type="EMBL" id="AJ938182">
    <property type="protein sequence ID" value="CAI80393.1"/>
    <property type="molecule type" value="Genomic_DNA"/>
</dbReference>
<dbReference type="RefSeq" id="WP_000506531.1">
    <property type="nucleotide sequence ID" value="NC_007622.1"/>
</dbReference>
<dbReference type="SMR" id="Q2YSH6"/>
<dbReference type="KEGG" id="sab:SAB0705"/>
<dbReference type="HOGENOM" id="CLU_005314_3_0_9"/>
<dbReference type="GO" id="GO:0031522">
    <property type="term" value="C:cell envelope Sec protein transport complex"/>
    <property type="evidence" value="ECO:0007669"/>
    <property type="project" value="TreeGrafter"/>
</dbReference>
<dbReference type="GO" id="GO:0005829">
    <property type="term" value="C:cytosol"/>
    <property type="evidence" value="ECO:0007669"/>
    <property type="project" value="TreeGrafter"/>
</dbReference>
<dbReference type="GO" id="GO:0005886">
    <property type="term" value="C:plasma membrane"/>
    <property type="evidence" value="ECO:0007669"/>
    <property type="project" value="UniProtKB-SubCell"/>
</dbReference>
<dbReference type="GO" id="GO:0005524">
    <property type="term" value="F:ATP binding"/>
    <property type="evidence" value="ECO:0007669"/>
    <property type="project" value="UniProtKB-UniRule"/>
</dbReference>
<dbReference type="GO" id="GO:0046872">
    <property type="term" value="F:metal ion binding"/>
    <property type="evidence" value="ECO:0007669"/>
    <property type="project" value="UniProtKB-KW"/>
</dbReference>
<dbReference type="GO" id="GO:0008564">
    <property type="term" value="F:protein-exporting ATPase activity"/>
    <property type="evidence" value="ECO:0007669"/>
    <property type="project" value="UniProtKB-EC"/>
</dbReference>
<dbReference type="GO" id="GO:0065002">
    <property type="term" value="P:intracellular protein transmembrane transport"/>
    <property type="evidence" value="ECO:0007669"/>
    <property type="project" value="UniProtKB-UniRule"/>
</dbReference>
<dbReference type="GO" id="GO:0017038">
    <property type="term" value="P:protein import"/>
    <property type="evidence" value="ECO:0007669"/>
    <property type="project" value="InterPro"/>
</dbReference>
<dbReference type="GO" id="GO:0006605">
    <property type="term" value="P:protein targeting"/>
    <property type="evidence" value="ECO:0007669"/>
    <property type="project" value="UniProtKB-UniRule"/>
</dbReference>
<dbReference type="GO" id="GO:0043952">
    <property type="term" value="P:protein transport by the Sec complex"/>
    <property type="evidence" value="ECO:0007669"/>
    <property type="project" value="TreeGrafter"/>
</dbReference>
<dbReference type="CDD" id="cd17928">
    <property type="entry name" value="DEXDc_SecA"/>
    <property type="match status" value="1"/>
</dbReference>
<dbReference type="CDD" id="cd18803">
    <property type="entry name" value="SF2_C_secA"/>
    <property type="match status" value="1"/>
</dbReference>
<dbReference type="FunFam" id="3.40.50.300:FF:000694">
    <property type="entry name" value="Preprotein translocase subunit SecA"/>
    <property type="match status" value="1"/>
</dbReference>
<dbReference type="FunFam" id="3.90.1440.10:FF:000002">
    <property type="entry name" value="Protein translocase subunit SecA"/>
    <property type="match status" value="1"/>
</dbReference>
<dbReference type="Gene3D" id="1.10.3060.10">
    <property type="entry name" value="Helical scaffold and wing domains of SecA"/>
    <property type="match status" value="1"/>
</dbReference>
<dbReference type="Gene3D" id="3.40.50.300">
    <property type="entry name" value="P-loop containing nucleotide triphosphate hydrolases"/>
    <property type="match status" value="2"/>
</dbReference>
<dbReference type="Gene3D" id="3.90.1440.10">
    <property type="entry name" value="SecA, preprotein cross-linking domain"/>
    <property type="match status" value="1"/>
</dbReference>
<dbReference type="HAMAP" id="MF_01382">
    <property type="entry name" value="SecA"/>
    <property type="match status" value="1"/>
</dbReference>
<dbReference type="InterPro" id="IPR014001">
    <property type="entry name" value="Helicase_ATP-bd"/>
</dbReference>
<dbReference type="InterPro" id="IPR001650">
    <property type="entry name" value="Helicase_C-like"/>
</dbReference>
<dbReference type="InterPro" id="IPR027417">
    <property type="entry name" value="P-loop_NTPase"/>
</dbReference>
<dbReference type="InterPro" id="IPR004027">
    <property type="entry name" value="SEC_C_motif"/>
</dbReference>
<dbReference type="InterPro" id="IPR000185">
    <property type="entry name" value="SecA"/>
</dbReference>
<dbReference type="InterPro" id="IPR020937">
    <property type="entry name" value="SecA_CS"/>
</dbReference>
<dbReference type="InterPro" id="IPR011115">
    <property type="entry name" value="SecA_DEAD"/>
</dbReference>
<dbReference type="InterPro" id="IPR014018">
    <property type="entry name" value="SecA_motor_DEAD"/>
</dbReference>
<dbReference type="InterPro" id="IPR011130">
    <property type="entry name" value="SecA_preprotein_X-link_dom"/>
</dbReference>
<dbReference type="InterPro" id="IPR044722">
    <property type="entry name" value="SecA_SF2_C"/>
</dbReference>
<dbReference type="InterPro" id="IPR011116">
    <property type="entry name" value="SecA_Wing/Scaffold"/>
</dbReference>
<dbReference type="InterPro" id="IPR036266">
    <property type="entry name" value="SecA_Wing/Scaffold_sf"/>
</dbReference>
<dbReference type="InterPro" id="IPR036670">
    <property type="entry name" value="SecA_X-link_sf"/>
</dbReference>
<dbReference type="NCBIfam" id="NF006630">
    <property type="entry name" value="PRK09200.1"/>
    <property type="match status" value="1"/>
</dbReference>
<dbReference type="NCBIfam" id="TIGR00963">
    <property type="entry name" value="secA"/>
    <property type="match status" value="1"/>
</dbReference>
<dbReference type="PANTHER" id="PTHR30612:SF0">
    <property type="entry name" value="CHLOROPLAST PROTEIN-TRANSPORTING ATPASE"/>
    <property type="match status" value="1"/>
</dbReference>
<dbReference type="PANTHER" id="PTHR30612">
    <property type="entry name" value="SECA INNER MEMBRANE COMPONENT OF SEC PROTEIN SECRETION SYSTEM"/>
    <property type="match status" value="1"/>
</dbReference>
<dbReference type="Pfam" id="PF21090">
    <property type="entry name" value="P-loop_SecA"/>
    <property type="match status" value="1"/>
</dbReference>
<dbReference type="Pfam" id="PF02810">
    <property type="entry name" value="SEC-C"/>
    <property type="match status" value="1"/>
</dbReference>
<dbReference type="Pfam" id="PF07517">
    <property type="entry name" value="SecA_DEAD"/>
    <property type="match status" value="1"/>
</dbReference>
<dbReference type="Pfam" id="PF01043">
    <property type="entry name" value="SecA_PP_bind"/>
    <property type="match status" value="1"/>
</dbReference>
<dbReference type="Pfam" id="PF07516">
    <property type="entry name" value="SecA_SW"/>
    <property type="match status" value="1"/>
</dbReference>
<dbReference type="PRINTS" id="PR00906">
    <property type="entry name" value="SECA"/>
</dbReference>
<dbReference type="SMART" id="SM00957">
    <property type="entry name" value="SecA_DEAD"/>
    <property type="match status" value="1"/>
</dbReference>
<dbReference type="SMART" id="SM00958">
    <property type="entry name" value="SecA_PP_bind"/>
    <property type="match status" value="1"/>
</dbReference>
<dbReference type="SUPFAM" id="SSF81886">
    <property type="entry name" value="Helical scaffold and wing domains of SecA"/>
    <property type="match status" value="1"/>
</dbReference>
<dbReference type="SUPFAM" id="SSF52540">
    <property type="entry name" value="P-loop containing nucleoside triphosphate hydrolases"/>
    <property type="match status" value="2"/>
</dbReference>
<dbReference type="SUPFAM" id="SSF81767">
    <property type="entry name" value="Pre-protein crosslinking domain of SecA"/>
    <property type="match status" value="1"/>
</dbReference>
<dbReference type="PROSITE" id="PS01312">
    <property type="entry name" value="SECA"/>
    <property type="match status" value="1"/>
</dbReference>
<dbReference type="PROSITE" id="PS51196">
    <property type="entry name" value="SECA_MOTOR_DEAD"/>
    <property type="match status" value="1"/>
</dbReference>
<gene>
    <name evidence="1" type="primary">secA</name>
    <name type="ordered locus">SAB0705</name>
</gene>
<reference key="1">
    <citation type="journal article" date="2007" name="PLoS ONE">
        <title>Molecular correlates of host specialization in Staphylococcus aureus.</title>
        <authorList>
            <person name="Herron-Olson L."/>
            <person name="Fitzgerald J.R."/>
            <person name="Musser J.M."/>
            <person name="Kapur V."/>
        </authorList>
    </citation>
    <scope>NUCLEOTIDE SEQUENCE [LARGE SCALE GENOMIC DNA]</scope>
    <source>
        <strain>bovine RF122 / ET3-1</strain>
    </source>
</reference>
<accession>Q2YSH6</accession>
<keyword id="KW-0067">ATP-binding</keyword>
<keyword id="KW-1003">Cell membrane</keyword>
<keyword id="KW-0963">Cytoplasm</keyword>
<keyword id="KW-0472">Membrane</keyword>
<keyword id="KW-0479">Metal-binding</keyword>
<keyword id="KW-0547">Nucleotide-binding</keyword>
<keyword id="KW-0653">Protein transport</keyword>
<keyword id="KW-1278">Translocase</keyword>
<keyword id="KW-0811">Translocation</keyword>
<keyword id="KW-0813">Transport</keyword>
<keyword id="KW-0862">Zinc</keyword>
<sequence length="843" mass="95960">MGFLSKILDGNNKEIKQLGKLADKVIALEEKTAILTDEEIRNKTKQFQTELADIDNVKKQNDYLDKILPEAYALVREGSKRVFNMTPYKVQIMGGIAIHKGDIAEMRTGEGKTLTATMPTYLNALAGRGVHVITVNEYLSSVQSEEMAELYNFLGLTVGLNLNSKTTEEKREAYAQDITYSTNNELGFDYLRDNMVNYSEDRVMRPLHFAIIDEVDSILIDEARTPLIISGEAEKSTSLYTQANVFAKMLKQDEDYKYDEKTKAVHLTEQGADKAERMFKVENLYDVQNVDVISHINTALRAHVTLQRDVDYMVVDGEVLIVDQFTGRTMPGRRFSEGLHQAIEAKEGVQIQNESKTMASITFQNYFRMYNKLAGMTGTAKTEEEEFRNIYNMTVTQIPTNKPVQRNDKSDLIYISQKGKFDAVVEDVVEKHKAGQPVLLGTVAVETSEYISNLLKKRGIRHDVLNAKNHEREAEIVAGAGQKGAVTIATNMAGRGTDIKLGEGVEELGGLAVIGTERHESRRIDDQLRGRSGRQGDKGDSRFYLSLQDELMIRFGSERLQKMMSRLGLDDSTPIESKMVSRAVESAQKRVEGNNFDARKRILEYDEVLRKQREIIYNERNSIIDEEDSSQVVDAMLRSTLQRSINYYINTADDEPEYQPFIDYINDIFLQEGDITEDDIKGKDAEDIFEVVWAKIEAAYQSQKDILEEQMNEFERMILLRSIDSHWTDHIDTMDQLRQGIHLRSYAQQNPLRDYQNEGHELFDIMMQNIEEDTCKFILKSVVQVEDNIEREKTTEFGEAKHVSAEDGKEKVKPKPIVKGDQVGRNDDCPCGSGKKFKNCHGK</sequence>
<organism>
    <name type="scientific">Staphylococcus aureus (strain bovine RF122 / ET3-1)</name>
    <dbReference type="NCBI Taxonomy" id="273036"/>
    <lineage>
        <taxon>Bacteria</taxon>
        <taxon>Bacillati</taxon>
        <taxon>Bacillota</taxon>
        <taxon>Bacilli</taxon>
        <taxon>Bacillales</taxon>
        <taxon>Staphylococcaceae</taxon>
        <taxon>Staphylococcus</taxon>
    </lineage>
</organism>
<evidence type="ECO:0000255" key="1">
    <source>
        <dbReference type="HAMAP-Rule" id="MF_01382"/>
    </source>
</evidence>
<evidence type="ECO:0000256" key="2">
    <source>
        <dbReference type="SAM" id="MobiDB-lite"/>
    </source>
</evidence>